<sequence>MSREKYYITTAIAYPNGKPHIGHAYELIATDAMARFQRLNGMDVYFLTGTDEHGIKMLQSARKEGITPRELADRNTSAFRRMAEVLNSSNDDYIRTSEERHYKASQAIWQAMVANGDIYKGGYAGWYSVRDEAYYGEEETEVRADGVRYGPQGTPVEWVEEESYFFRLSAYQDKLLDLYENNPGFIMPAERRNEIVSFVKSGLKDLSISRTTFDWGIPVPGDEKHVMYVWVDALTNYITALGYPDTTDERWAYWPANAHIIGKDISRFHAVYWPAFLMSAQLPLPKRVFAHGFLFNRGEKMSKSVGNVIDPFELVERYGLDQLRYFLMREVPFGQDGSYSHEAIVNRTNADLANDLGNLAQRSLSMIAKNCEGKVPQPGAFSEADKAILDQADAALETARKAMDDQALHLALGAIFAVVAEANRYFAGQEPWALRKTDPARMGTVLYVTAEVLRRVGIMVQPFIPQSAEKLLDILAVPADKRQFADVLASPLAGGTDLPAPQPVFPRYVEADEQN</sequence>
<keyword id="KW-0002">3D-structure</keyword>
<keyword id="KW-0030">Aminoacyl-tRNA synthetase</keyword>
<keyword id="KW-0067">ATP-binding</keyword>
<keyword id="KW-0963">Cytoplasm</keyword>
<keyword id="KW-0436">Ligase</keyword>
<keyword id="KW-0547">Nucleotide-binding</keyword>
<keyword id="KW-0648">Protein biosynthesis</keyword>
<proteinExistence type="evidence at protein level"/>
<name>SYM_BRUSU</name>
<accession>P59078</accession>
<accession>G0K9R9</accession>
<comment type="function">
    <text evidence="1">Is required not only for elongation of protein synthesis but also for the initiation of all mRNA translation through initiator tRNA(fMet) aminoacylation.</text>
</comment>
<comment type="catalytic activity">
    <reaction evidence="1">
        <text>tRNA(Met) + L-methionine + ATP = L-methionyl-tRNA(Met) + AMP + diphosphate</text>
        <dbReference type="Rhea" id="RHEA:13481"/>
        <dbReference type="Rhea" id="RHEA-COMP:9667"/>
        <dbReference type="Rhea" id="RHEA-COMP:9698"/>
        <dbReference type="ChEBI" id="CHEBI:30616"/>
        <dbReference type="ChEBI" id="CHEBI:33019"/>
        <dbReference type="ChEBI" id="CHEBI:57844"/>
        <dbReference type="ChEBI" id="CHEBI:78442"/>
        <dbReference type="ChEBI" id="CHEBI:78530"/>
        <dbReference type="ChEBI" id="CHEBI:456215"/>
        <dbReference type="EC" id="6.1.1.10"/>
    </reaction>
</comment>
<comment type="subunit">
    <text evidence="1">Monomer.</text>
</comment>
<comment type="subcellular location">
    <subcellularLocation>
        <location evidence="1">Cytoplasm</location>
    </subcellularLocation>
</comment>
<comment type="similarity">
    <text evidence="1">Belongs to the class-I aminoacyl-tRNA synthetase family. MetG type 2B subfamily.</text>
</comment>
<dbReference type="EC" id="6.1.1.10" evidence="1"/>
<dbReference type="EMBL" id="AE014291">
    <property type="protein sequence ID" value="AAN29918.1"/>
    <property type="molecule type" value="Genomic_DNA"/>
</dbReference>
<dbReference type="EMBL" id="CP002997">
    <property type="protein sequence ID" value="AEM18335.1"/>
    <property type="molecule type" value="Genomic_DNA"/>
</dbReference>
<dbReference type="RefSeq" id="WP_004689678.1">
    <property type="nucleotide sequence ID" value="NZ_KN046804.1"/>
</dbReference>
<dbReference type="PDB" id="5K0S">
    <property type="method" value="X-ray"/>
    <property type="resolution" value="2.45 A"/>
    <property type="chains" value="A/B/C=1-515"/>
</dbReference>
<dbReference type="PDB" id="5K0T">
    <property type="method" value="X-ray"/>
    <property type="resolution" value="2.60 A"/>
    <property type="chains" value="A/B/C=1-515"/>
</dbReference>
<dbReference type="PDBsum" id="5K0S"/>
<dbReference type="PDBsum" id="5K0T"/>
<dbReference type="SMR" id="P59078"/>
<dbReference type="GeneID" id="45052047"/>
<dbReference type="KEGG" id="bms:BR0995"/>
<dbReference type="KEGG" id="bsi:BS1330_I0991"/>
<dbReference type="PATRIC" id="fig|204722.21.peg.732"/>
<dbReference type="HOGENOM" id="CLU_009710_9_4_5"/>
<dbReference type="PhylomeDB" id="P59078"/>
<dbReference type="EvolutionaryTrace" id="P59078"/>
<dbReference type="Proteomes" id="UP000007104">
    <property type="component" value="Chromosome I"/>
</dbReference>
<dbReference type="GO" id="GO:0005737">
    <property type="term" value="C:cytoplasm"/>
    <property type="evidence" value="ECO:0007669"/>
    <property type="project" value="UniProtKB-SubCell"/>
</dbReference>
<dbReference type="GO" id="GO:0005524">
    <property type="term" value="F:ATP binding"/>
    <property type="evidence" value="ECO:0007669"/>
    <property type="project" value="UniProtKB-UniRule"/>
</dbReference>
<dbReference type="GO" id="GO:0004825">
    <property type="term" value="F:methionine-tRNA ligase activity"/>
    <property type="evidence" value="ECO:0007669"/>
    <property type="project" value="UniProtKB-UniRule"/>
</dbReference>
<dbReference type="GO" id="GO:0006431">
    <property type="term" value="P:methionyl-tRNA aminoacylation"/>
    <property type="evidence" value="ECO:0007669"/>
    <property type="project" value="UniProtKB-UniRule"/>
</dbReference>
<dbReference type="CDD" id="cd07957">
    <property type="entry name" value="Anticodon_Ia_Met"/>
    <property type="match status" value="1"/>
</dbReference>
<dbReference type="CDD" id="cd00814">
    <property type="entry name" value="MetRS_core"/>
    <property type="match status" value="1"/>
</dbReference>
<dbReference type="FunFam" id="2.170.220.10:FF:000001">
    <property type="entry name" value="methionine--tRNA ligase, mitochondrial"/>
    <property type="match status" value="1"/>
</dbReference>
<dbReference type="Gene3D" id="2.170.220.10">
    <property type="match status" value="1"/>
</dbReference>
<dbReference type="Gene3D" id="3.40.50.620">
    <property type="entry name" value="HUPs"/>
    <property type="match status" value="1"/>
</dbReference>
<dbReference type="Gene3D" id="1.10.730.10">
    <property type="entry name" value="Isoleucyl-tRNA Synthetase, Domain 1"/>
    <property type="match status" value="1"/>
</dbReference>
<dbReference type="HAMAP" id="MF_01228">
    <property type="entry name" value="Met_tRNA_synth_type2"/>
    <property type="match status" value="1"/>
</dbReference>
<dbReference type="InterPro" id="IPR001412">
    <property type="entry name" value="aa-tRNA-synth_I_CS"/>
</dbReference>
<dbReference type="InterPro" id="IPR041872">
    <property type="entry name" value="Anticodon_Met"/>
</dbReference>
<dbReference type="InterPro" id="IPR014758">
    <property type="entry name" value="Met-tRNA_synth"/>
</dbReference>
<dbReference type="InterPro" id="IPR023457">
    <property type="entry name" value="Met-tRNA_synth_2"/>
</dbReference>
<dbReference type="InterPro" id="IPR015413">
    <property type="entry name" value="Methionyl/Leucyl_tRNA_Synth"/>
</dbReference>
<dbReference type="InterPro" id="IPR033911">
    <property type="entry name" value="MetRS_core"/>
</dbReference>
<dbReference type="InterPro" id="IPR014729">
    <property type="entry name" value="Rossmann-like_a/b/a_fold"/>
</dbReference>
<dbReference type="InterPro" id="IPR009080">
    <property type="entry name" value="tRNAsynth_Ia_anticodon-bd"/>
</dbReference>
<dbReference type="NCBIfam" id="TIGR00398">
    <property type="entry name" value="metG"/>
    <property type="match status" value="1"/>
</dbReference>
<dbReference type="NCBIfam" id="NF008900">
    <property type="entry name" value="PRK12267.1"/>
    <property type="match status" value="1"/>
</dbReference>
<dbReference type="PANTHER" id="PTHR43326:SF1">
    <property type="entry name" value="METHIONINE--TRNA LIGASE, MITOCHONDRIAL"/>
    <property type="match status" value="1"/>
</dbReference>
<dbReference type="PANTHER" id="PTHR43326">
    <property type="entry name" value="METHIONYL-TRNA SYNTHETASE"/>
    <property type="match status" value="1"/>
</dbReference>
<dbReference type="Pfam" id="PF19303">
    <property type="entry name" value="Anticodon_3"/>
    <property type="match status" value="1"/>
</dbReference>
<dbReference type="Pfam" id="PF09334">
    <property type="entry name" value="tRNA-synt_1g"/>
    <property type="match status" value="1"/>
</dbReference>
<dbReference type="PRINTS" id="PR01041">
    <property type="entry name" value="TRNASYNTHMET"/>
</dbReference>
<dbReference type="SUPFAM" id="SSF47323">
    <property type="entry name" value="Anticodon-binding domain of a subclass of class I aminoacyl-tRNA synthetases"/>
    <property type="match status" value="1"/>
</dbReference>
<dbReference type="SUPFAM" id="SSF52374">
    <property type="entry name" value="Nucleotidylyl transferase"/>
    <property type="match status" value="1"/>
</dbReference>
<dbReference type="PROSITE" id="PS00178">
    <property type="entry name" value="AA_TRNA_LIGASE_I"/>
    <property type="match status" value="1"/>
</dbReference>
<evidence type="ECO:0000255" key="1">
    <source>
        <dbReference type="HAMAP-Rule" id="MF_01228"/>
    </source>
</evidence>
<evidence type="ECO:0007829" key="2">
    <source>
        <dbReference type="PDB" id="5K0S"/>
    </source>
</evidence>
<evidence type="ECO:0007829" key="3">
    <source>
        <dbReference type="PDB" id="5K0T"/>
    </source>
</evidence>
<feature type="chain" id="PRO_0000139213" description="Methionine--tRNA ligase">
    <location>
        <begin position="1"/>
        <end position="515"/>
    </location>
</feature>
<feature type="short sequence motif" description="'HIGH' region">
    <location>
        <begin position="13"/>
        <end position="23"/>
    </location>
</feature>
<feature type="short sequence motif" description="'KMSKS' region">
    <location>
        <begin position="300"/>
        <end position="304"/>
    </location>
</feature>
<feature type="binding site" evidence="1">
    <location>
        <position position="303"/>
    </location>
    <ligand>
        <name>ATP</name>
        <dbReference type="ChEBI" id="CHEBI:30616"/>
    </ligand>
</feature>
<feature type="strand" evidence="2">
    <location>
        <begin position="5"/>
        <end position="10"/>
    </location>
</feature>
<feature type="helix" evidence="2">
    <location>
        <begin position="21"/>
        <end position="39"/>
    </location>
</feature>
<feature type="strand" evidence="2">
    <location>
        <begin position="43"/>
        <end position="50"/>
    </location>
</feature>
<feature type="helix" evidence="2">
    <location>
        <begin position="55"/>
        <end position="64"/>
    </location>
</feature>
<feature type="helix" evidence="2">
    <location>
        <begin position="68"/>
        <end position="85"/>
    </location>
</feature>
<feature type="strand" evidence="2">
    <location>
        <begin position="91"/>
        <end position="95"/>
    </location>
</feature>
<feature type="helix" evidence="2">
    <location>
        <begin position="99"/>
        <end position="114"/>
    </location>
</feature>
<feature type="strand" evidence="2">
    <location>
        <begin position="118"/>
        <end position="122"/>
    </location>
</feature>
<feature type="strand" evidence="2">
    <location>
        <begin position="125"/>
        <end position="128"/>
    </location>
</feature>
<feature type="turn" evidence="2">
    <location>
        <begin position="129"/>
        <end position="132"/>
    </location>
</feature>
<feature type="strand" evidence="2">
    <location>
        <begin position="133"/>
        <end position="135"/>
    </location>
</feature>
<feature type="helix" evidence="2">
    <location>
        <begin position="137"/>
        <end position="139"/>
    </location>
</feature>
<feature type="strand" evidence="2">
    <location>
        <begin position="153"/>
        <end position="155"/>
    </location>
</feature>
<feature type="strand" evidence="2">
    <location>
        <begin position="157"/>
        <end position="159"/>
    </location>
</feature>
<feature type="strand" evidence="2">
    <location>
        <begin position="162"/>
        <end position="166"/>
    </location>
</feature>
<feature type="helix" evidence="2">
    <location>
        <begin position="168"/>
        <end position="171"/>
    </location>
</feature>
<feature type="helix" evidence="2">
    <location>
        <begin position="172"/>
        <end position="181"/>
    </location>
</feature>
<feature type="strand" evidence="2">
    <location>
        <begin position="185"/>
        <end position="188"/>
    </location>
</feature>
<feature type="helix" evidence="2">
    <location>
        <begin position="189"/>
        <end position="200"/>
    </location>
</feature>
<feature type="strand" evidence="2">
    <location>
        <begin position="209"/>
        <end position="212"/>
    </location>
</feature>
<feature type="strand" evidence="2">
    <location>
        <begin position="214"/>
        <end position="216"/>
    </location>
</feature>
<feature type="strand" evidence="2">
    <location>
        <begin position="222"/>
        <end position="227"/>
    </location>
</feature>
<feature type="helix" evidence="2">
    <location>
        <begin position="229"/>
        <end position="234"/>
    </location>
</feature>
<feature type="helix" evidence="2">
    <location>
        <begin position="236"/>
        <end position="239"/>
    </location>
</feature>
<feature type="turn" evidence="2">
    <location>
        <begin position="240"/>
        <end position="244"/>
    </location>
</feature>
<feature type="helix" evidence="2">
    <location>
        <begin position="249"/>
        <end position="253"/>
    </location>
</feature>
<feature type="strand" evidence="2">
    <location>
        <begin position="257"/>
        <end position="262"/>
    </location>
</feature>
<feature type="helix" evidence="2">
    <location>
        <begin position="263"/>
        <end position="265"/>
    </location>
</feature>
<feature type="helix" evidence="2">
    <location>
        <begin position="266"/>
        <end position="270"/>
    </location>
</feature>
<feature type="helix" evidence="2">
    <location>
        <begin position="272"/>
        <end position="279"/>
    </location>
</feature>
<feature type="strand" evidence="2">
    <location>
        <begin position="288"/>
        <end position="291"/>
    </location>
</feature>
<feature type="strand" evidence="2">
    <location>
        <begin position="294"/>
        <end position="296"/>
    </location>
</feature>
<feature type="helix" evidence="2">
    <location>
        <begin position="311"/>
        <end position="318"/>
    </location>
</feature>
<feature type="helix" evidence="2">
    <location>
        <begin position="320"/>
        <end position="330"/>
    </location>
</feature>
<feature type="strand" evidence="2">
    <location>
        <begin position="337"/>
        <end position="339"/>
    </location>
</feature>
<feature type="helix" evidence="2">
    <location>
        <begin position="341"/>
        <end position="351"/>
    </location>
</feature>
<feature type="turn" evidence="2">
    <location>
        <begin position="352"/>
        <end position="355"/>
    </location>
</feature>
<feature type="helix" evidence="2">
    <location>
        <begin position="356"/>
        <end position="370"/>
    </location>
</feature>
<feature type="helix" evidence="2">
    <location>
        <begin position="383"/>
        <end position="404"/>
    </location>
</feature>
<feature type="helix" evidence="2">
    <location>
        <begin position="408"/>
        <end position="429"/>
    </location>
</feature>
<feature type="helix" evidence="2">
    <location>
        <begin position="431"/>
        <end position="437"/>
    </location>
</feature>
<feature type="helix" evidence="2">
    <location>
        <begin position="439"/>
        <end position="460"/>
    </location>
</feature>
<feature type="turn" evidence="2">
    <location>
        <begin position="461"/>
        <end position="463"/>
    </location>
</feature>
<feature type="helix" evidence="2">
    <location>
        <begin position="465"/>
        <end position="474"/>
    </location>
</feature>
<feature type="helix" evidence="3">
    <location>
        <begin position="479"/>
        <end position="481"/>
    </location>
</feature>
<feature type="helix" evidence="2">
    <location>
        <begin position="486"/>
        <end position="489"/>
    </location>
</feature>
<organism>
    <name type="scientific">Brucella suis biovar 1 (strain 1330)</name>
    <dbReference type="NCBI Taxonomy" id="204722"/>
    <lineage>
        <taxon>Bacteria</taxon>
        <taxon>Pseudomonadati</taxon>
        <taxon>Pseudomonadota</taxon>
        <taxon>Alphaproteobacteria</taxon>
        <taxon>Hyphomicrobiales</taxon>
        <taxon>Brucellaceae</taxon>
        <taxon>Brucella/Ochrobactrum group</taxon>
        <taxon>Brucella</taxon>
    </lineage>
</organism>
<reference key="1">
    <citation type="journal article" date="2002" name="Proc. Natl. Acad. Sci. U.S.A.">
        <title>The Brucella suis genome reveals fundamental similarities between animal and plant pathogens and symbionts.</title>
        <authorList>
            <person name="Paulsen I.T."/>
            <person name="Seshadri R."/>
            <person name="Nelson K.E."/>
            <person name="Eisen J.A."/>
            <person name="Heidelberg J.F."/>
            <person name="Read T.D."/>
            <person name="Dodson R.J."/>
            <person name="Umayam L.A."/>
            <person name="Brinkac L.M."/>
            <person name="Beanan M.J."/>
            <person name="Daugherty S.C."/>
            <person name="DeBoy R.T."/>
            <person name="Durkin A.S."/>
            <person name="Kolonay J.F."/>
            <person name="Madupu R."/>
            <person name="Nelson W.C."/>
            <person name="Ayodeji B."/>
            <person name="Kraul M."/>
            <person name="Shetty J."/>
            <person name="Malek J.A."/>
            <person name="Van Aken S.E."/>
            <person name="Riedmuller S."/>
            <person name="Tettelin H."/>
            <person name="Gill S.R."/>
            <person name="White O."/>
            <person name="Salzberg S.L."/>
            <person name="Hoover D.L."/>
            <person name="Lindler L.E."/>
            <person name="Halling S.M."/>
            <person name="Boyle S.M."/>
            <person name="Fraser C.M."/>
        </authorList>
    </citation>
    <scope>NUCLEOTIDE SEQUENCE [LARGE SCALE GENOMIC DNA]</scope>
    <source>
        <strain>1330</strain>
    </source>
</reference>
<reference key="2">
    <citation type="journal article" date="2011" name="J. Bacteriol.">
        <title>Revised genome sequence of Brucella suis 1330.</title>
        <authorList>
            <person name="Tae H."/>
            <person name="Shallom S."/>
            <person name="Settlage R."/>
            <person name="Preston D."/>
            <person name="Adams L.G."/>
            <person name="Garner H.R."/>
        </authorList>
    </citation>
    <scope>NUCLEOTIDE SEQUENCE [LARGE SCALE GENOMIC DNA]</scope>
    <source>
        <strain>1330</strain>
    </source>
</reference>
<gene>
    <name evidence="1" type="primary">metG</name>
    <name type="ordered locus">BR0995</name>
    <name type="ordered locus">BS1330_I0991</name>
</gene>
<protein>
    <recommendedName>
        <fullName evidence="1">Methionine--tRNA ligase</fullName>
        <ecNumber evidence="1">6.1.1.10</ecNumber>
    </recommendedName>
    <alternativeName>
        <fullName evidence="1">Methionyl-tRNA synthetase</fullName>
        <shortName evidence="1">MetRS</shortName>
    </alternativeName>
</protein>